<protein>
    <recommendedName>
        <fullName>Rab11 family-interacting protein 2</fullName>
        <shortName>Rab11-FIP2</shortName>
    </recommendedName>
    <alternativeName>
        <fullName>NRip11</fullName>
    </alternativeName>
</protein>
<accession>Q7L804</accession>
<accession>A6NEI4</accession>
<accession>Q3I768</accession>
<accession>Q9Y2F0</accession>
<name>RFIP2_HUMAN</name>
<feature type="chain" id="PRO_0000097306" description="Rab11 family-interacting protein 2">
    <location>
        <begin position="1"/>
        <end position="512"/>
    </location>
</feature>
<feature type="domain" description="C2" evidence="1">
    <location>
        <begin position="1"/>
        <end position="120"/>
    </location>
</feature>
<feature type="domain" description="FIP-RBD" evidence="2">
    <location>
        <begin position="437"/>
        <end position="499"/>
    </location>
</feature>
<feature type="region of interest" description="Necessary for its cellular translocation to the plasma membrane">
    <location>
        <begin position="15"/>
        <end position="102"/>
    </location>
</feature>
<feature type="region of interest" description="Disordered" evidence="3">
    <location>
        <begin position="169"/>
        <end position="239"/>
    </location>
</feature>
<feature type="region of interest" description="Disordered" evidence="3">
    <location>
        <begin position="262"/>
        <end position="285"/>
    </location>
</feature>
<feature type="region of interest" description="Disordered" evidence="3">
    <location>
        <begin position="361"/>
        <end position="392"/>
    </location>
</feature>
<feature type="region of interest" description="Necessary for interaction with AP2A1, RAB11A, subcellular location, endocytosis activity and homooligomerization" evidence="7">
    <location>
        <begin position="465"/>
        <end position="512"/>
    </location>
</feature>
<feature type="short sequence motif" description="NPF 1">
    <location>
        <begin position="323"/>
        <end position="325"/>
    </location>
</feature>
<feature type="short sequence motif" description="NPF 2">
    <location>
        <begin position="406"/>
        <end position="408"/>
    </location>
</feature>
<feature type="short sequence motif" description="NPF 3">
    <location>
        <begin position="440"/>
        <end position="442"/>
    </location>
</feature>
<feature type="compositionally biased region" description="Polar residues" evidence="3">
    <location>
        <begin position="178"/>
        <end position="188"/>
    </location>
</feature>
<feature type="compositionally biased region" description="Low complexity" evidence="3">
    <location>
        <begin position="226"/>
        <end position="236"/>
    </location>
</feature>
<feature type="compositionally biased region" description="Basic and acidic residues" evidence="3">
    <location>
        <begin position="361"/>
        <end position="374"/>
    </location>
</feature>
<feature type="modified residue" description="Phosphoserine; by MARK2" evidence="12 19">
    <location>
        <position position="227"/>
    </location>
</feature>
<feature type="modified residue" description="Phosphoserine" evidence="19">
    <location>
        <position position="277"/>
    </location>
</feature>
<feature type="splice variant" id="VSP_056649" description="In isoform 2." evidence="17">
    <original>S</original>
    <variation>RNTLLTPAVAEWRGSLRWAEL</variation>
    <location>
        <position position="422"/>
    </location>
</feature>
<feature type="sequence variant" id="VAR_051316" description="In dbSNP:rs34028100.">
    <original>F</original>
    <variation>V</variation>
    <location>
        <position position="152"/>
    </location>
</feature>
<feature type="mutagenesis site" description="No effect." evidence="12">
    <original>S</original>
    <variation>A</variation>
    <location>
        <position position="223"/>
    </location>
</feature>
<feature type="mutagenesis site" description="No effect." evidence="12">
    <original>S</original>
    <variation>A</variation>
    <location>
        <position position="224"/>
    </location>
</feature>
<feature type="mutagenesis site" description="Abolishes phosphorylation by MARK2 and induces defects in the reestablishment of junctional complexes." evidence="12">
    <original>S</original>
    <variation>A</variation>
    <location>
        <position position="227"/>
    </location>
</feature>
<feature type="mutagenesis site" description="No effect." evidence="12">
    <original>S</original>
    <variation>A</variation>
    <location>
        <position position="229"/>
    </location>
</feature>
<feature type="mutagenesis site" description="Severe reduction of the interaction with REPS1 and AP2A1. No effects on its subcellular location. Modifies the endocytosis activity." evidence="7">
    <original>NPF</original>
    <variation>AAA</variation>
    <location>
        <begin position="406"/>
        <end position="408"/>
    </location>
</feature>
<feature type="mutagenesis site" description="Abolishes the interaction with REPS1 and AP2A1. Modifies its subcellular location and the endocytosis activity. Enhances homooligomerization." evidence="7">
    <original>YID</original>
    <variation>AAA</variation>
    <location>
        <begin position="480"/>
        <end position="482"/>
    </location>
</feature>
<feature type="mutagenesis site" description="No effect on the interaction with RAB11A. Abolishes the vesicular localization." evidence="13">
    <original>Y</original>
    <variation>F</variation>
    <location>
        <position position="480"/>
    </location>
</feature>
<feature type="mutagenesis site" description="Abolishes the interaction with RAB11A and the vesicular localization." evidence="13">
    <original>I</original>
    <variation>E</variation>
    <location>
        <position position="481"/>
    </location>
</feature>
<feature type="helix" evidence="20">
    <location>
        <begin position="453"/>
        <end position="491"/>
    </location>
</feature>
<feature type="helix" evidence="20">
    <location>
        <begin position="493"/>
        <end position="496"/>
    </location>
</feature>
<feature type="strand" evidence="20">
    <location>
        <begin position="497"/>
        <end position="499"/>
    </location>
</feature>
<keyword id="KW-0002">3D-structure</keyword>
<keyword id="KW-0025">Alternative splicing</keyword>
<keyword id="KW-1003">Cell membrane</keyword>
<keyword id="KW-0966">Cell projection</keyword>
<keyword id="KW-0967">Endosome</keyword>
<keyword id="KW-0472">Membrane</keyword>
<keyword id="KW-0597">Phosphoprotein</keyword>
<keyword id="KW-0653">Protein transport</keyword>
<keyword id="KW-1267">Proteomics identification</keyword>
<keyword id="KW-1185">Reference proteome</keyword>
<keyword id="KW-0677">Repeat</keyword>
<keyword id="KW-0813">Transport</keyword>
<sequence>MMLSEQAQKWFPTHVQVTVLQAKDLKPKGKSGTNDTYTIIQLGKEKYSTSVAEKTLEPVWKEEASFELPGLLIQGSPEKYILFLIVMHRSLVGLDKFLGQVAINLNDIFEDKQRRKTEWFRLESKQGKRIKNRGEIKVNIQFMRNNMTASMFDLSMKDKTRSPFAKLKDKMKGRKNDGTFSDTSSAIIPSTHMPDANSEFSSGEIQMKSKPKKPFLLGPQRLSSAHSMSDLSGSHMSSEKLKAGTIGQTHLLGHQLDSFGTVPESGSLKSPHRRTLSFDTSKMNQPDSIVDEGELCFGRQNDPFTNVTASLPQKFATLPRKKNPFEESSETWDSSMNLFSKPIEIRKENKREKREKVSLFERVTGKKDSRRSDKLNNGGSDSPCDLKSPNAFSENRQDYFDYESTNPFTAKFRASNIMPSSSFHMSPTSNEDLRKIPDSNPFDATAGYRSLTYEEVLQELVKHKELLRRKDTHIRELEDYIDNLLVRVMEETPSILRVPYEPSRKAGKFSNS</sequence>
<gene>
    <name type="primary">RAB11FIP2</name>
    <name type="synonym">KIAA0941</name>
</gene>
<organism>
    <name type="scientific">Homo sapiens</name>
    <name type="common">Human</name>
    <dbReference type="NCBI Taxonomy" id="9606"/>
    <lineage>
        <taxon>Eukaryota</taxon>
        <taxon>Metazoa</taxon>
        <taxon>Chordata</taxon>
        <taxon>Craniata</taxon>
        <taxon>Vertebrata</taxon>
        <taxon>Euteleostomi</taxon>
        <taxon>Mammalia</taxon>
        <taxon>Eutheria</taxon>
        <taxon>Euarchontoglires</taxon>
        <taxon>Primates</taxon>
        <taxon>Haplorrhini</taxon>
        <taxon>Catarrhini</taxon>
        <taxon>Hominidae</taxon>
        <taxon>Homo</taxon>
    </lineage>
</organism>
<comment type="function">
    <text evidence="7 10 11 12 14 16">A Rab11 effector binding preferentially phosphatidylinositol 3,4,5-trisphosphate (PtdInsP3) and phosphatidic acid (PA) and acting in the regulation of the transport of vesicles from the endosomal recycling compartment (ERC) to the plasma membrane. Involved in insulin granule exocytosis. Also involved in receptor-mediated endocytosis and membrane trafficking of recycling endosomes, probably originating from clathrin-coated vesicles. Required in a complex with MYO5B and RAB11 for the transport of NPC1L1 to the plasma membrane. Also acts as a regulator of cell polarity. Plays an essential role in phagocytosis through a mechanism involving TICAM2, RAC1 and CDC42 Rho GTPases for controlling actin-dynamics.</text>
</comment>
<comment type="subunit">
    <text evidence="4 5 6 7 8 9 10 11 13 14 15 16">Homooligomerizes in a Rab11-independent manner. Forms a heterooligomeric complex with RAB11FIP4. Interacts with AP2A1, MYO5B, RAB25 and REPS1. Interacts with RAB11A and RAB11B (activated GTP-bound form). Interacts with NPC1L1. Interacts (via NPF motifs) with EHD1 and EHD3. Interacts with TICAM2; this interaction directs RAB11FIP2 to the phagosome (PubMed:30883606). Interacts with RAB14 and RAB25 (GTP-bound forms) (PubMed:26032412).</text>
</comment>
<comment type="interaction">
    <interactant intactId="EBI-1049676">
        <id>Q7L804</id>
    </interactant>
    <interactant intactId="EBI-6658203">
        <id>Q86YD7</id>
        <label>FAM90A1</label>
    </interactant>
    <organismsDiffer>false</organismsDiffer>
    <experiments>3</experiments>
</comment>
<comment type="interaction">
    <interactant intactId="EBI-1049676">
        <id>Q7L804</id>
    </interactant>
    <interactant intactId="EBI-2510157">
        <id>Q96EF6</id>
        <label>FBXO17</label>
    </interactant>
    <organismsDiffer>false</organismsDiffer>
    <experiments>3</experiments>
</comment>
<comment type="interaction">
    <interactant intactId="EBI-1049676">
        <id>Q7L804</id>
    </interactant>
    <interactant intactId="EBI-744771">
        <id>O75344</id>
        <label>FKBP6</label>
    </interactant>
    <organismsDiffer>false</organismsDiffer>
    <experiments>3</experiments>
</comment>
<comment type="interaction">
    <interactant intactId="EBI-1049676">
        <id>Q7L804</id>
    </interactant>
    <interactant intactId="EBI-7116203">
        <id>O75031</id>
        <label>HSF2BP</label>
    </interactant>
    <organismsDiffer>false</organismsDiffer>
    <experiments>3</experiments>
</comment>
<comment type="interaction">
    <interactant intactId="EBI-1049676">
        <id>Q7L804</id>
    </interactant>
    <interactant intactId="EBI-2556193">
        <id>Q63ZY3</id>
        <label>KANK2</label>
    </interactant>
    <organismsDiffer>false</organismsDiffer>
    <experiments>3</experiments>
</comment>
<comment type="interaction">
    <interactant intactId="EBI-1049676">
        <id>Q7L804</id>
    </interactant>
    <interactant intactId="EBI-14066006">
        <id>Q4G0R1</id>
        <label>PIBF1</label>
    </interactant>
    <organismsDiffer>false</organismsDiffer>
    <experiments>3</experiments>
</comment>
<comment type="interaction">
    <interactant intactId="EBI-1049676">
        <id>Q7L804</id>
    </interactant>
    <interactant intactId="EBI-745098">
        <id>P62491</id>
        <label>RAB11A</label>
    </interactant>
    <organismsDiffer>false</organismsDiffer>
    <experiments>16</experiments>
</comment>
<comment type="interaction">
    <interactant intactId="EBI-1049676">
        <id>Q7L804</id>
    </interactant>
    <interactant intactId="EBI-722234">
        <id>Q15907</id>
        <label>RAB11B</label>
    </interactant>
    <organismsDiffer>false</organismsDiffer>
    <experiments>8</experiments>
</comment>
<comment type="interaction">
    <interactant intactId="EBI-1049676">
        <id>Q7L804</id>
    </interactant>
    <interactant intactId="EBI-1049676">
        <id>Q7L804</id>
        <label>RAB11FIP2</label>
    </interactant>
    <organismsDiffer>false</organismsDiffer>
    <experiments>8</experiments>
</comment>
<comment type="interaction">
    <interactant intactId="EBI-1049676">
        <id>Q7L804</id>
    </interactant>
    <interactant intactId="EBI-1050500">
        <id>P57735</id>
        <label>RAB25</label>
    </interactant>
    <organismsDiffer>false</organismsDiffer>
    <experiments>5</experiments>
</comment>
<comment type="interaction">
    <interactant intactId="EBI-1049676">
        <id>Q7L804</id>
    </interactant>
    <interactant intactId="EBI-356498">
        <id>P62258</id>
        <label>YWHAE</label>
    </interactant>
    <organismsDiffer>false</organismsDiffer>
    <experiments>6</experiments>
</comment>
<comment type="subcellular location">
    <subcellularLocation>
        <location evidence="16">Cell projection</location>
        <location evidence="16">Phagocytic cup</location>
    </subcellularLocation>
    <subcellularLocation>
        <location>Cell membrane</location>
        <topology>Peripheral membrane protein</topology>
    </subcellularLocation>
    <subcellularLocation>
        <location>Recycling endosome membrane</location>
        <topology>Peripheral membrane protein</topology>
    </subcellularLocation>
    <text>Translocates with RAB11A from the vesicles of the endocytic recycling compartment (ERC) to the plasma membrane.</text>
</comment>
<comment type="alternative products">
    <event type="alternative splicing"/>
    <isoform>
        <id>Q7L804-1</id>
        <name>1</name>
        <sequence type="displayed"/>
    </isoform>
    <isoform>
        <id>Q7L804-2</id>
        <name>2</name>
        <sequence type="described" ref="VSP_056649"/>
    </isoform>
</comment>
<comment type="PTM">
    <text evidence="12">Phosphorylation at Ser-227 by MARK2 regulates epithelial cell polarity.</text>
</comment>
<comment type="sequence caution" evidence="18">
    <conflict type="erroneous initiation">
        <sequence resource="EMBL-CDS" id="BAA76785"/>
    </conflict>
</comment>
<reference key="1">
    <citation type="journal article" date="2006" name="Mol. Biol. Cell">
        <title>Interactions between EHD proteins and Rab11-FIP2: a role for EHD3 in early endosomal transport.</title>
        <authorList>
            <person name="Naslavsky N."/>
            <person name="Rahajeng J."/>
            <person name="Sharma M."/>
            <person name="Jovic M."/>
            <person name="Caplan S."/>
        </authorList>
    </citation>
    <scope>NUCLEOTIDE SEQUENCE [MRNA] (ISOFORM 2)</scope>
    <scope>FUNCTION</scope>
    <scope>INTERACTION WITH EHD1 AND EHD3</scope>
</reference>
<reference key="2">
    <citation type="submission" date="2001-05" db="EMBL/GenBank/DDBJ databases">
        <title>Rip11 and nRip11 are Rab11/25 interacting proteins.</title>
        <authorList>
            <person name="Prekeris R."/>
            <person name="Davies J.M."/>
            <person name="Scheller R.H."/>
        </authorList>
    </citation>
    <scope>NUCLEOTIDE SEQUENCE [MRNA] (ISOFORM 1)</scope>
</reference>
<reference key="3">
    <citation type="journal article" date="1999" name="DNA Res.">
        <title>Prediction of the coding sequences of unidentified human genes. XIII. The complete sequences of 100 new cDNA clones from brain which code for large proteins in vitro.</title>
        <authorList>
            <person name="Nagase T."/>
            <person name="Ishikawa K."/>
            <person name="Suyama M."/>
            <person name="Kikuno R."/>
            <person name="Hirosawa M."/>
            <person name="Miyajima N."/>
            <person name="Tanaka A."/>
            <person name="Kotani H."/>
            <person name="Nomura N."/>
            <person name="Ohara O."/>
        </authorList>
    </citation>
    <scope>NUCLEOTIDE SEQUENCE [LARGE SCALE MRNA] (ISOFORM 1)</scope>
    <source>
        <tissue>Brain</tissue>
    </source>
</reference>
<reference key="4">
    <citation type="journal article" date="2004" name="Nature">
        <title>The DNA sequence and comparative analysis of human chromosome 10.</title>
        <authorList>
            <person name="Deloukas P."/>
            <person name="Earthrowl M.E."/>
            <person name="Grafham D.V."/>
            <person name="Rubenfield M."/>
            <person name="French L."/>
            <person name="Steward C.A."/>
            <person name="Sims S.K."/>
            <person name="Jones M.C."/>
            <person name="Searle S."/>
            <person name="Scott C."/>
            <person name="Howe K."/>
            <person name="Hunt S.E."/>
            <person name="Andrews T.D."/>
            <person name="Gilbert J.G.R."/>
            <person name="Swarbreck D."/>
            <person name="Ashurst J.L."/>
            <person name="Taylor A."/>
            <person name="Battles J."/>
            <person name="Bird C.P."/>
            <person name="Ainscough R."/>
            <person name="Almeida J.P."/>
            <person name="Ashwell R.I.S."/>
            <person name="Ambrose K.D."/>
            <person name="Babbage A.K."/>
            <person name="Bagguley C.L."/>
            <person name="Bailey J."/>
            <person name="Banerjee R."/>
            <person name="Bates K."/>
            <person name="Beasley H."/>
            <person name="Bray-Allen S."/>
            <person name="Brown A.J."/>
            <person name="Brown J.Y."/>
            <person name="Burford D.C."/>
            <person name="Burrill W."/>
            <person name="Burton J."/>
            <person name="Cahill P."/>
            <person name="Camire D."/>
            <person name="Carter N.P."/>
            <person name="Chapman J.C."/>
            <person name="Clark S.Y."/>
            <person name="Clarke G."/>
            <person name="Clee C.M."/>
            <person name="Clegg S."/>
            <person name="Corby N."/>
            <person name="Coulson A."/>
            <person name="Dhami P."/>
            <person name="Dutta I."/>
            <person name="Dunn M."/>
            <person name="Faulkner L."/>
            <person name="Frankish A."/>
            <person name="Frankland J.A."/>
            <person name="Garner P."/>
            <person name="Garnett J."/>
            <person name="Gribble S."/>
            <person name="Griffiths C."/>
            <person name="Grocock R."/>
            <person name="Gustafson E."/>
            <person name="Hammond S."/>
            <person name="Harley J.L."/>
            <person name="Hart E."/>
            <person name="Heath P.D."/>
            <person name="Ho T.P."/>
            <person name="Hopkins B."/>
            <person name="Horne J."/>
            <person name="Howden P.J."/>
            <person name="Huckle E."/>
            <person name="Hynds C."/>
            <person name="Johnson C."/>
            <person name="Johnson D."/>
            <person name="Kana A."/>
            <person name="Kay M."/>
            <person name="Kimberley A.M."/>
            <person name="Kershaw J.K."/>
            <person name="Kokkinaki M."/>
            <person name="Laird G.K."/>
            <person name="Lawlor S."/>
            <person name="Lee H.M."/>
            <person name="Leongamornlert D.A."/>
            <person name="Laird G."/>
            <person name="Lloyd C."/>
            <person name="Lloyd D.M."/>
            <person name="Loveland J."/>
            <person name="Lovell J."/>
            <person name="McLaren S."/>
            <person name="McLay K.E."/>
            <person name="McMurray A."/>
            <person name="Mashreghi-Mohammadi M."/>
            <person name="Matthews L."/>
            <person name="Milne S."/>
            <person name="Nickerson T."/>
            <person name="Nguyen M."/>
            <person name="Overton-Larty E."/>
            <person name="Palmer S.A."/>
            <person name="Pearce A.V."/>
            <person name="Peck A.I."/>
            <person name="Pelan S."/>
            <person name="Phillimore B."/>
            <person name="Porter K."/>
            <person name="Rice C.M."/>
            <person name="Rogosin A."/>
            <person name="Ross M.T."/>
            <person name="Sarafidou T."/>
            <person name="Sehra H.K."/>
            <person name="Shownkeen R."/>
            <person name="Skuce C.D."/>
            <person name="Smith M."/>
            <person name="Standring L."/>
            <person name="Sycamore N."/>
            <person name="Tester J."/>
            <person name="Thorpe A."/>
            <person name="Torcasso W."/>
            <person name="Tracey A."/>
            <person name="Tromans A."/>
            <person name="Tsolas J."/>
            <person name="Wall M."/>
            <person name="Walsh J."/>
            <person name="Wang H."/>
            <person name="Weinstock K."/>
            <person name="West A.P."/>
            <person name="Willey D.L."/>
            <person name="Whitehead S.L."/>
            <person name="Wilming L."/>
            <person name="Wray P.W."/>
            <person name="Young L."/>
            <person name="Chen Y."/>
            <person name="Lovering R.C."/>
            <person name="Moschonas N.K."/>
            <person name="Siebert R."/>
            <person name="Fechtel K."/>
            <person name="Bentley D."/>
            <person name="Durbin R.M."/>
            <person name="Hubbard T."/>
            <person name="Doucette-Stamm L."/>
            <person name="Beck S."/>
            <person name="Smith D.R."/>
            <person name="Rogers J."/>
        </authorList>
    </citation>
    <scope>NUCLEOTIDE SEQUENCE [LARGE SCALE GENOMIC DNA]</scope>
</reference>
<reference key="5">
    <citation type="submission" date="2005-09" db="EMBL/GenBank/DDBJ databases">
        <authorList>
            <person name="Mural R.J."/>
            <person name="Istrail S."/>
            <person name="Sutton G.G."/>
            <person name="Florea L."/>
            <person name="Halpern A.L."/>
            <person name="Mobarry C.M."/>
            <person name="Lippert R."/>
            <person name="Walenz B."/>
            <person name="Shatkay H."/>
            <person name="Dew I."/>
            <person name="Miller J.R."/>
            <person name="Flanigan M.J."/>
            <person name="Edwards N.J."/>
            <person name="Bolanos R."/>
            <person name="Fasulo D."/>
            <person name="Halldorsson B.V."/>
            <person name="Hannenhalli S."/>
            <person name="Turner R."/>
            <person name="Yooseph S."/>
            <person name="Lu F."/>
            <person name="Nusskern D.R."/>
            <person name="Shue B.C."/>
            <person name="Zheng X.H."/>
            <person name="Zhong F."/>
            <person name="Delcher A.L."/>
            <person name="Huson D.H."/>
            <person name="Kravitz S.A."/>
            <person name="Mouchard L."/>
            <person name="Reinert K."/>
            <person name="Remington K.A."/>
            <person name="Clark A.G."/>
            <person name="Waterman M.S."/>
            <person name="Eichler E.E."/>
            <person name="Adams M.D."/>
            <person name="Hunkapiller M.W."/>
            <person name="Myers E.W."/>
            <person name="Venter J.C."/>
        </authorList>
    </citation>
    <scope>NUCLEOTIDE SEQUENCE [LARGE SCALE GENOMIC DNA]</scope>
</reference>
<reference key="6">
    <citation type="journal article" date="2004" name="Genome Res.">
        <title>The status, quality, and expansion of the NIH full-length cDNA project: the Mammalian Gene Collection (MGC).</title>
        <authorList>
            <consortium name="The MGC Project Team"/>
        </authorList>
    </citation>
    <scope>NUCLEOTIDE SEQUENCE [LARGE SCALE MRNA] (ISOFORM 1)</scope>
    <source>
        <tissue>Brain</tissue>
    </source>
</reference>
<reference key="7">
    <citation type="journal article" date="2001" name="J. Biol. Chem.">
        <title>Identification and characterization of a family of Rab11-interacting proteins.</title>
        <authorList>
            <person name="Hales C.M."/>
            <person name="Griner R."/>
            <person name="Hobdy-Henderson K.C."/>
            <person name="Dorn M.C."/>
            <person name="Hardy D."/>
            <person name="Kumar R."/>
            <person name="Navarre J."/>
            <person name="Chan E.K.L."/>
            <person name="Lapierre L.A."/>
            <person name="Goldenring J.R."/>
        </authorList>
    </citation>
    <scope>INTERACTION WITH MYO5B; RAB11A; RAB11B AND RAB25</scope>
    <scope>SUBCELLULAR LOCATION</scope>
</reference>
<reference key="8">
    <citation type="journal article" date="2002" name="Biochem. Biophys. Res. Commun.">
        <title>The novel Rab11-FIP/Rip/RCP family of proteins displays extensive homo- and hetero-interacting abilities.</title>
        <authorList>
            <person name="Wallace D.M."/>
            <person name="Lindsay A.J."/>
            <person name="Hendrick A.G."/>
            <person name="McCaffrey M.W."/>
        </authorList>
    </citation>
    <scope>SUBUNIT</scope>
</reference>
<reference key="9">
    <citation type="journal article" date="2002" name="Biochem. Biophys. Res. Commun.">
        <title>Rab11-FIP4 interacts with Rab11 in a GTP-dependent manner and its overexpression condenses the Rab11 positive compartment in HeLa cells.</title>
        <authorList>
            <person name="Wallace D.M."/>
            <person name="Lindsay A.J."/>
            <person name="Hendrick A.G."/>
            <person name="McCaffrey M.W."/>
        </authorList>
    </citation>
    <scope>SUBUNIT</scope>
</reference>
<reference key="10">
    <citation type="journal article" date="2002" name="J. Biol. Chem.">
        <title>Rab11-FIP2 functions in transferrin recycling and associates with endosomal membranes via its COOH-terminal domain.</title>
        <authorList>
            <person name="Lindsay A.J."/>
            <person name="McCaffrey M.W."/>
        </authorList>
    </citation>
    <scope>SUBUNIT</scope>
    <scope>INTERACTION WITH RAB11A</scope>
    <scope>SUBCELLULAR LOCATION</scope>
</reference>
<reference key="11">
    <citation type="journal article" date="2002" name="J. Biol. Chem.">
        <title>Rab11-FIP2, an adaptor protein connecting cellular components involved in internalization and recycling of epidermal growth factor receptors.</title>
        <authorList>
            <person name="Cullis D.N."/>
            <person name="Philip B."/>
            <person name="Baleja J.D."/>
            <person name="Feig L.A."/>
        </authorList>
    </citation>
    <scope>FUNCTION IN RECEPTOR-MEDIATED ENDOCYTOSIS</scope>
    <scope>SUBUNIT</scope>
    <scope>INTERACTION WITH REPS1 AND AP2A1</scope>
    <scope>MUTAGENESIS OF 406-ASN--PHE-408 AND 480-TYR--ASP-482</scope>
    <scope>NPF MOTIF</scope>
    <scope>SUBCELLULAR LOCATION</scope>
</reference>
<reference key="12">
    <citation type="journal article" date="2004" name="J. Biol. Chem.">
        <title>Molecular characterization of Rab11 interactions with members of the family of Rab11-interacting proteins.</title>
        <authorList>
            <person name="Junutula J.R."/>
            <person name="Schonteich E."/>
            <person name="Wilson G.M."/>
            <person name="Peden A.A."/>
            <person name="Scheller R.H."/>
            <person name="Prekeris R."/>
        </authorList>
    </citation>
    <scope>SUBUNIT</scope>
    <scope>INTERACTION WITH GTP-BOUND RAB11A AND GTP-BOUND RAB11B</scope>
</reference>
<reference key="13">
    <citation type="journal article" date="2004" name="J. Cell Sci.">
        <title>The C2 domains of the class I Rab11 family of interacting proteins target recycling vesicles to the plasma membrane.</title>
        <authorList>
            <person name="Lindsay A.J."/>
            <person name="McCaffrey M.W."/>
        </authorList>
    </citation>
    <scope>FUNCTION IN ENDOSOME TRAFFICKING</scope>
    <scope>INTERACTION WITH PTDINSP3 AND PA</scope>
    <scope>SUBCELLULAR LOCATION</scope>
</reference>
<reference key="14">
    <citation type="journal article" date="2006" name="Mol. Biol. Cell">
        <title>MARK2/EMK1/Par-1Balpha phosphorylation of Rab11-family interacting protein 2 is necessary for the timely establishment of polarity in Madin-Darby canine kidney cells.</title>
        <authorList>
            <person name="Ducharme N.A."/>
            <person name="Hales C.M."/>
            <person name="Lapierre L.A."/>
            <person name="Ham A.J."/>
            <person name="Oztan A."/>
            <person name="Apodaca G."/>
            <person name="Goldenring J.R."/>
        </authorList>
    </citation>
    <scope>FUNCTION</scope>
    <scope>PHOSPHORYLATION AT SER-227</scope>
    <scope>MUTAGENESIS OF SER-223; SER-224; SER-227 AND SER-229</scope>
</reference>
<reference key="15">
    <citation type="journal article" date="2009" name="J. Biol. Chem.">
        <title>Requirement of myosin Vb.Rab11a.Rab11-FIP2 complex in cholesterol-regulated translocation of NPC1L1 to the cell surface.</title>
        <authorList>
            <person name="Chu B.-B."/>
            <person name="Ge L."/>
            <person name="Xie C."/>
            <person name="Zhao Y."/>
            <person name="Miao H.-H."/>
            <person name="Wang J."/>
            <person name="Li B.-L."/>
            <person name="Song B.-L."/>
        </authorList>
    </citation>
    <scope>FUNCTION</scope>
    <scope>INTERACTION WITH NPC1L1</scope>
</reference>
<reference key="16">
    <citation type="journal article" date="2013" name="J. Proteome Res.">
        <title>Toward a comprehensive characterization of a human cancer cell phosphoproteome.</title>
        <authorList>
            <person name="Zhou H."/>
            <person name="Di Palma S."/>
            <person name="Preisinger C."/>
            <person name="Peng M."/>
            <person name="Polat A.N."/>
            <person name="Heck A.J."/>
            <person name="Mohammed S."/>
        </authorList>
    </citation>
    <scope>PHOSPHORYLATION [LARGE SCALE ANALYSIS] AT SER-227 AND SER-277</scope>
    <scope>IDENTIFICATION BY MASS SPECTROMETRY [LARGE SCALE ANALYSIS]</scope>
    <source>
        <tissue>Cervix carcinoma</tissue>
        <tissue>Erythroleukemia</tissue>
    </source>
</reference>
<reference key="17">
    <citation type="journal article" date="2015" name="J. Biol. Chem.">
        <title>Structure-Function Analyses of the Interactions between Rab11 and Rab14 Small GTPases with Their Shared Effector Rab Coupling Protein (RCP).</title>
        <authorList>
            <person name="Lall P."/>
            <person name="Lindsay A.J."/>
            <person name="Hanscom S."/>
            <person name="Kecman T."/>
            <person name="Taglauer E.S."/>
            <person name="McVeigh U.M."/>
            <person name="Franklin E."/>
            <person name="McCaffrey M.W."/>
            <person name="Khan A.R."/>
        </authorList>
    </citation>
    <scope>INTERACTION WITH RAB14 AND RAB25</scope>
</reference>
<reference key="18">
    <citation type="journal article" date="2019" name="PLoS Pathog.">
        <title>The TLR4 adaptor TRAM controls the phagocytosis of Gram-negative bacteria by interacting with the Rab11-family interacting protein 2.</title>
        <authorList>
            <person name="Skjesol A."/>
            <person name="Yurchenko M."/>
            <person name="Boesl K."/>
            <person name="Gravastrand C."/>
            <person name="Nilsen K.E."/>
            <person name="Groevdal L.M."/>
            <person name="Agliano F."/>
            <person name="Patane F."/>
            <person name="Lentini G."/>
            <person name="Kim H."/>
            <person name="Teti G."/>
            <person name="Kumar Sharma A."/>
            <person name="Kandasamy R.K."/>
            <person name="Sporsheim B."/>
            <person name="Starheim K.K."/>
            <person name="Golenbock D.T."/>
            <person name="Stenmark H."/>
            <person name="McCaffrey M."/>
            <person name="Espevik T."/>
            <person name="Husebye H."/>
        </authorList>
    </citation>
    <scope>FUNCTION</scope>
    <scope>INTERACTION WITH TICAM2</scope>
    <scope>SUBCELLULAR LOCATION</scope>
</reference>
<reference key="19">
    <citation type="journal article" date="2006" name="Structure">
        <title>Crystal structure of rab11 in complex with rab11 family interacting protein 2.</title>
        <authorList>
            <person name="Jagoe W.N."/>
            <person name="Lindsay A.J."/>
            <person name="Read R.J."/>
            <person name="McCoy A.J."/>
            <person name="McCaffrey M.W."/>
            <person name="Khan A.R."/>
        </authorList>
    </citation>
    <scope>X-RAY CRYSTALLOGRAPHY (2.44 ANGSTROMS) OF 410-512</scope>
    <scope>INTERACTION WITH RAB11A</scope>
    <scope>SUBUNIT</scope>
    <scope>SUBCELLULAR LOCATION</scope>
    <scope>MUTAGENESIS OF TYR-480 AND ILE-481</scope>
</reference>
<dbReference type="EMBL" id="DQ013303">
    <property type="protein sequence ID" value="AAY67796.1"/>
    <property type="molecule type" value="mRNA"/>
</dbReference>
<dbReference type="EMBL" id="AY037299">
    <property type="protein sequence ID" value="AAK68635.1"/>
    <property type="molecule type" value="mRNA"/>
</dbReference>
<dbReference type="EMBL" id="AB023158">
    <property type="protein sequence ID" value="BAA76785.2"/>
    <property type="status" value="ALT_INIT"/>
    <property type="molecule type" value="mRNA"/>
</dbReference>
<dbReference type="EMBL" id="AC022395">
    <property type="status" value="NOT_ANNOTATED_CDS"/>
    <property type="molecule type" value="Genomic_DNA"/>
</dbReference>
<dbReference type="EMBL" id="CH471066">
    <property type="protein sequence ID" value="EAW49423.1"/>
    <property type="molecule type" value="Genomic_DNA"/>
</dbReference>
<dbReference type="EMBL" id="BC075073">
    <property type="protein sequence ID" value="AAH75073.1"/>
    <property type="molecule type" value="mRNA"/>
</dbReference>
<dbReference type="EMBL" id="BC075074">
    <property type="protein sequence ID" value="AAH75074.1"/>
    <property type="molecule type" value="mRNA"/>
</dbReference>
<dbReference type="CCDS" id="CCDS7602.1">
    <molecule id="Q7L804-1"/>
</dbReference>
<dbReference type="CCDS" id="CCDS81512.1">
    <molecule id="Q7L804-2"/>
</dbReference>
<dbReference type="RefSeq" id="NP_001317096.1">
    <molecule id="Q7L804-2"/>
    <property type="nucleotide sequence ID" value="NM_001330167.2"/>
</dbReference>
<dbReference type="RefSeq" id="NP_055719.1">
    <molecule id="Q7L804-1"/>
    <property type="nucleotide sequence ID" value="NM_014904.3"/>
</dbReference>
<dbReference type="PDB" id="2GZD">
    <property type="method" value="X-ray"/>
    <property type="resolution" value="2.44 A"/>
    <property type="chains" value="C/D=410-512"/>
</dbReference>
<dbReference type="PDB" id="2GZH">
    <property type="method" value="X-ray"/>
    <property type="resolution" value="2.47 A"/>
    <property type="chains" value="B=410-512"/>
</dbReference>
<dbReference type="PDB" id="2K6S">
    <property type="method" value="NMR"/>
    <property type="chains" value="A/B=450-489"/>
</dbReference>
<dbReference type="PDB" id="3TSO">
    <property type="method" value="X-ray"/>
    <property type="resolution" value="1.80 A"/>
    <property type="chains" value="C/D=440-512"/>
</dbReference>
<dbReference type="PDB" id="4C4P">
    <property type="method" value="X-ray"/>
    <property type="resolution" value="2.00 A"/>
    <property type="chains" value="B=410-512"/>
</dbReference>
<dbReference type="PDB" id="6S8X">
    <property type="method" value="X-ray"/>
    <property type="resolution" value="2.29 A"/>
    <property type="chains" value="A/B/D/E=439-512"/>
</dbReference>
<dbReference type="PDBsum" id="2GZD"/>
<dbReference type="PDBsum" id="2GZH"/>
<dbReference type="PDBsum" id="2K6S"/>
<dbReference type="PDBsum" id="3TSO"/>
<dbReference type="PDBsum" id="4C4P"/>
<dbReference type="PDBsum" id="6S8X"/>
<dbReference type="BMRB" id="Q7L804"/>
<dbReference type="SMR" id="Q7L804"/>
<dbReference type="BioGRID" id="116514">
    <property type="interactions" value="90"/>
</dbReference>
<dbReference type="CORUM" id="Q7L804"/>
<dbReference type="DIP" id="DIP-29139N"/>
<dbReference type="FunCoup" id="Q7L804">
    <property type="interactions" value="3510"/>
</dbReference>
<dbReference type="IntAct" id="Q7L804">
    <property type="interactions" value="47"/>
</dbReference>
<dbReference type="MINT" id="Q7L804"/>
<dbReference type="STRING" id="9606.ENSP00000358200"/>
<dbReference type="GlyGen" id="Q7L804">
    <property type="glycosylation" value="1 site, 1 O-linked glycan (1 site)"/>
</dbReference>
<dbReference type="iPTMnet" id="Q7L804"/>
<dbReference type="PhosphoSitePlus" id="Q7L804"/>
<dbReference type="SwissPalm" id="Q7L804"/>
<dbReference type="BioMuta" id="RAB11FIP2"/>
<dbReference type="DMDM" id="67472131"/>
<dbReference type="jPOST" id="Q7L804"/>
<dbReference type="MassIVE" id="Q7L804"/>
<dbReference type="PaxDb" id="9606-ENSP00000347839"/>
<dbReference type="PeptideAtlas" id="Q7L804"/>
<dbReference type="ProteomicsDB" id="61692"/>
<dbReference type="ProteomicsDB" id="68832">
    <molecule id="Q7L804-1"/>
</dbReference>
<dbReference type="Pumba" id="Q7L804"/>
<dbReference type="Antibodypedia" id="46274">
    <property type="antibodies" value="156 antibodies from 28 providers"/>
</dbReference>
<dbReference type="DNASU" id="22841"/>
<dbReference type="Ensembl" id="ENST00000355624.8">
    <molecule id="Q7L804-1"/>
    <property type="protein sequence ID" value="ENSP00000347839.3"/>
    <property type="gene ID" value="ENSG00000107560.12"/>
</dbReference>
<dbReference type="Ensembl" id="ENST00000369199.5">
    <molecule id="Q7L804-2"/>
    <property type="protein sequence ID" value="ENSP00000358200.3"/>
    <property type="gene ID" value="ENSG00000107560.12"/>
</dbReference>
<dbReference type="GeneID" id="22841"/>
<dbReference type="KEGG" id="hsa:22841"/>
<dbReference type="MANE-Select" id="ENST00000355624.8">
    <property type="protein sequence ID" value="ENSP00000347839.3"/>
    <property type="RefSeq nucleotide sequence ID" value="NM_014904.3"/>
    <property type="RefSeq protein sequence ID" value="NP_055719.1"/>
</dbReference>
<dbReference type="UCSC" id="uc001ldj.2">
    <molecule id="Q7L804-1"/>
    <property type="organism name" value="human"/>
</dbReference>
<dbReference type="AGR" id="HGNC:29152"/>
<dbReference type="CTD" id="22841"/>
<dbReference type="DisGeNET" id="22841"/>
<dbReference type="GeneCards" id="RAB11FIP2"/>
<dbReference type="HGNC" id="HGNC:29152">
    <property type="gene designation" value="RAB11FIP2"/>
</dbReference>
<dbReference type="HPA" id="ENSG00000107560">
    <property type="expression patterns" value="Low tissue specificity"/>
</dbReference>
<dbReference type="MIM" id="608599">
    <property type="type" value="gene"/>
</dbReference>
<dbReference type="neXtProt" id="NX_Q7L804"/>
<dbReference type="OpenTargets" id="ENSG00000107560"/>
<dbReference type="PharmGKB" id="PA134961225"/>
<dbReference type="VEuPathDB" id="HostDB:ENSG00000107560"/>
<dbReference type="eggNOG" id="ENOG502QUFJ">
    <property type="taxonomic scope" value="Eukaryota"/>
</dbReference>
<dbReference type="GeneTree" id="ENSGT00940000158482"/>
<dbReference type="HOGENOM" id="CLU_015242_0_0_1"/>
<dbReference type="InParanoid" id="Q7L804"/>
<dbReference type="OMA" id="GETHQES"/>
<dbReference type="OrthoDB" id="8956628at2759"/>
<dbReference type="PAN-GO" id="Q7L804">
    <property type="GO annotations" value="3 GO annotations based on evolutionary models"/>
</dbReference>
<dbReference type="PhylomeDB" id="Q7L804"/>
<dbReference type="TreeFam" id="TF326172"/>
<dbReference type="PathwayCommons" id="Q7L804"/>
<dbReference type="Reactome" id="R-HSA-432040">
    <property type="pathway name" value="Vasopressin regulates renal water homeostasis via Aquaporins"/>
</dbReference>
<dbReference type="SignaLink" id="Q7L804"/>
<dbReference type="SIGNOR" id="Q7L804"/>
<dbReference type="BioGRID-ORCS" id="22841">
    <property type="hits" value="18 hits in 1163 CRISPR screens"/>
</dbReference>
<dbReference type="ChiTaRS" id="RAB11FIP2">
    <property type="organism name" value="human"/>
</dbReference>
<dbReference type="EvolutionaryTrace" id="Q7L804"/>
<dbReference type="GeneWiki" id="RAB11FIP2"/>
<dbReference type="GenomeRNAi" id="22841"/>
<dbReference type="Pharos" id="Q7L804">
    <property type="development level" value="Tbio"/>
</dbReference>
<dbReference type="PRO" id="PR:Q7L804"/>
<dbReference type="Proteomes" id="UP000005640">
    <property type="component" value="Chromosome 10"/>
</dbReference>
<dbReference type="RNAct" id="Q7L804">
    <property type="molecule type" value="protein"/>
</dbReference>
<dbReference type="Bgee" id="ENSG00000107560">
    <property type="expression patterns" value="Expressed in seminal vesicle and 210 other cell types or tissues"/>
</dbReference>
<dbReference type="GO" id="GO:0042995">
    <property type="term" value="C:cell projection"/>
    <property type="evidence" value="ECO:0007669"/>
    <property type="project" value="UniProtKB-KW"/>
</dbReference>
<dbReference type="GO" id="GO:0030659">
    <property type="term" value="C:cytoplasmic vesicle membrane"/>
    <property type="evidence" value="ECO:0000304"/>
    <property type="project" value="Reactome"/>
</dbReference>
<dbReference type="GO" id="GO:0005768">
    <property type="term" value="C:endosome"/>
    <property type="evidence" value="ECO:0000314"/>
    <property type="project" value="UniProtKB"/>
</dbReference>
<dbReference type="GO" id="GO:0043231">
    <property type="term" value="C:intracellular membrane-bounded organelle"/>
    <property type="evidence" value="ECO:0000314"/>
    <property type="project" value="HPA"/>
</dbReference>
<dbReference type="GO" id="GO:0005654">
    <property type="term" value="C:nucleoplasm"/>
    <property type="evidence" value="ECO:0000314"/>
    <property type="project" value="HPA"/>
</dbReference>
<dbReference type="GO" id="GO:0001891">
    <property type="term" value="C:phagocytic cup"/>
    <property type="evidence" value="ECO:0000314"/>
    <property type="project" value="UniProtKB"/>
</dbReference>
<dbReference type="GO" id="GO:0055038">
    <property type="term" value="C:recycling endosome membrane"/>
    <property type="evidence" value="ECO:0007669"/>
    <property type="project" value="UniProtKB-SubCell"/>
</dbReference>
<dbReference type="GO" id="GO:0042802">
    <property type="term" value="F:identical protein binding"/>
    <property type="evidence" value="ECO:0000353"/>
    <property type="project" value="IntAct"/>
</dbReference>
<dbReference type="GO" id="GO:0042803">
    <property type="term" value="F:protein homodimerization activity"/>
    <property type="evidence" value="ECO:0000353"/>
    <property type="project" value="UniProtKB"/>
</dbReference>
<dbReference type="GO" id="GO:0019901">
    <property type="term" value="F:protein kinase binding"/>
    <property type="evidence" value="ECO:0000353"/>
    <property type="project" value="UniProtKB"/>
</dbReference>
<dbReference type="GO" id="GO:0031267">
    <property type="term" value="F:small GTPase binding"/>
    <property type="evidence" value="ECO:0007669"/>
    <property type="project" value="InterPro"/>
</dbReference>
<dbReference type="GO" id="GO:0030010">
    <property type="term" value="P:establishment of cell polarity"/>
    <property type="evidence" value="ECO:0000315"/>
    <property type="project" value="UniProtKB"/>
</dbReference>
<dbReference type="GO" id="GO:0035773">
    <property type="term" value="P:insulin secretion involved in cellular response to glucose stimulus"/>
    <property type="evidence" value="ECO:0000250"/>
    <property type="project" value="UniProtKB"/>
</dbReference>
<dbReference type="GO" id="GO:0006909">
    <property type="term" value="P:phagocytosis"/>
    <property type="evidence" value="ECO:0000315"/>
    <property type="project" value="UniProtKB"/>
</dbReference>
<dbReference type="GO" id="GO:0043547">
    <property type="term" value="P:positive regulation of GTPase activity"/>
    <property type="evidence" value="ECO:0000314"/>
    <property type="project" value="UniProtKB"/>
</dbReference>
<dbReference type="GO" id="GO:1903078">
    <property type="term" value="P:positive regulation of protein localization to plasma membrane"/>
    <property type="evidence" value="ECO:0007669"/>
    <property type="project" value="Ensembl"/>
</dbReference>
<dbReference type="GO" id="GO:0045055">
    <property type="term" value="P:regulated exocytosis"/>
    <property type="evidence" value="ECO:0000250"/>
    <property type="project" value="UniProtKB"/>
</dbReference>
<dbReference type="GO" id="GO:0035669">
    <property type="term" value="P:TRAM-dependent toll-like receptor 4 signaling pathway"/>
    <property type="evidence" value="ECO:0000314"/>
    <property type="project" value="UniProtKB"/>
</dbReference>
<dbReference type="CDD" id="cd08682">
    <property type="entry name" value="C2_Rab11-FIP_classI"/>
    <property type="match status" value="1"/>
</dbReference>
<dbReference type="FunFam" id="1.20.5.2440:FF:000002">
    <property type="entry name" value="rab11 family-interacting protein 2 isoform X1"/>
    <property type="match status" value="1"/>
</dbReference>
<dbReference type="FunFam" id="2.60.40.150:FF:000070">
    <property type="entry name" value="rab11 family-interacting protein 2 isoform X1"/>
    <property type="match status" value="1"/>
</dbReference>
<dbReference type="Gene3D" id="1.20.5.2440">
    <property type="match status" value="1"/>
</dbReference>
<dbReference type="Gene3D" id="2.60.40.150">
    <property type="entry name" value="C2 domain"/>
    <property type="match status" value="1"/>
</dbReference>
<dbReference type="InterPro" id="IPR000008">
    <property type="entry name" value="C2_dom"/>
</dbReference>
<dbReference type="InterPro" id="IPR035892">
    <property type="entry name" value="C2_domain_sf"/>
</dbReference>
<dbReference type="InterPro" id="IPR037245">
    <property type="entry name" value="FIP-RBD_C_sf"/>
</dbReference>
<dbReference type="InterPro" id="IPR037789">
    <property type="entry name" value="FIP_classI"/>
</dbReference>
<dbReference type="InterPro" id="IPR019018">
    <property type="entry name" value="Rab-bd_FIP-RBD"/>
</dbReference>
<dbReference type="PANTHER" id="PTHR15746:SF20">
    <property type="entry name" value="RAB11 FAMILY-INTERACTING PROTEIN 2"/>
    <property type="match status" value="1"/>
</dbReference>
<dbReference type="PANTHER" id="PTHR15746">
    <property type="entry name" value="RAB11-RELATED"/>
    <property type="match status" value="1"/>
</dbReference>
<dbReference type="Pfam" id="PF00168">
    <property type="entry name" value="C2"/>
    <property type="match status" value="1"/>
</dbReference>
<dbReference type="Pfam" id="PF09457">
    <property type="entry name" value="RBD-FIP"/>
    <property type="match status" value="1"/>
</dbReference>
<dbReference type="SMART" id="SM00239">
    <property type="entry name" value="C2"/>
    <property type="match status" value="1"/>
</dbReference>
<dbReference type="SUPFAM" id="SSF49562">
    <property type="entry name" value="C2 domain (Calcium/lipid-binding domain, CaLB)"/>
    <property type="match status" value="1"/>
</dbReference>
<dbReference type="SUPFAM" id="SSF144270">
    <property type="entry name" value="Eferin C-derminal domain-like"/>
    <property type="match status" value="1"/>
</dbReference>
<dbReference type="PROSITE" id="PS50004">
    <property type="entry name" value="C2"/>
    <property type="match status" value="1"/>
</dbReference>
<dbReference type="PROSITE" id="PS51511">
    <property type="entry name" value="FIP_RBD"/>
    <property type="match status" value="1"/>
</dbReference>
<evidence type="ECO:0000255" key="1">
    <source>
        <dbReference type="PROSITE-ProRule" id="PRU00041"/>
    </source>
</evidence>
<evidence type="ECO:0000255" key="2">
    <source>
        <dbReference type="PROSITE-ProRule" id="PRU00844"/>
    </source>
</evidence>
<evidence type="ECO:0000256" key="3">
    <source>
        <dbReference type="SAM" id="MobiDB-lite"/>
    </source>
</evidence>
<evidence type="ECO:0000269" key="4">
    <source>
    </source>
</evidence>
<evidence type="ECO:0000269" key="5">
    <source>
    </source>
</evidence>
<evidence type="ECO:0000269" key="6">
    <source>
    </source>
</evidence>
<evidence type="ECO:0000269" key="7">
    <source>
    </source>
</evidence>
<evidence type="ECO:0000269" key="8">
    <source>
    </source>
</evidence>
<evidence type="ECO:0000269" key="9">
    <source>
    </source>
</evidence>
<evidence type="ECO:0000269" key="10">
    <source>
    </source>
</evidence>
<evidence type="ECO:0000269" key="11">
    <source>
    </source>
</evidence>
<evidence type="ECO:0000269" key="12">
    <source>
    </source>
</evidence>
<evidence type="ECO:0000269" key="13">
    <source>
    </source>
</evidence>
<evidence type="ECO:0000269" key="14">
    <source>
    </source>
</evidence>
<evidence type="ECO:0000269" key="15">
    <source>
    </source>
</evidence>
<evidence type="ECO:0000269" key="16">
    <source>
    </source>
</evidence>
<evidence type="ECO:0000303" key="17">
    <source>
    </source>
</evidence>
<evidence type="ECO:0000305" key="18"/>
<evidence type="ECO:0007744" key="19">
    <source>
    </source>
</evidence>
<evidence type="ECO:0007829" key="20">
    <source>
        <dbReference type="PDB" id="3TSO"/>
    </source>
</evidence>
<proteinExistence type="evidence at protein level"/>